<gene>
    <name type="primary">PPC</name>
</gene>
<protein>
    <recommendedName>
        <fullName>Phosphoenolpyruvate carboxylase</fullName>
        <shortName>PEPC</shortName>
        <shortName>PEPCase</shortName>
        <ecNumber>4.1.1.31</ecNumber>
    </recommendedName>
</protein>
<accession>P51063</accession>
<name>CAPP_PICAB</name>
<comment type="function">
    <text>Through the carboxylation of phosphoenolpyruvate (PEP) it forms oxaloacetate, a four-carbon dicarboxylic acid source for the tricarboxylic acid cycle.</text>
</comment>
<comment type="catalytic activity">
    <reaction>
        <text>oxaloacetate + phosphate = phosphoenolpyruvate + hydrogencarbonate</text>
        <dbReference type="Rhea" id="RHEA:28370"/>
        <dbReference type="ChEBI" id="CHEBI:16452"/>
        <dbReference type="ChEBI" id="CHEBI:17544"/>
        <dbReference type="ChEBI" id="CHEBI:43474"/>
        <dbReference type="ChEBI" id="CHEBI:58702"/>
        <dbReference type="EC" id="4.1.1.31"/>
    </reaction>
</comment>
<comment type="cofactor">
    <cofactor evidence="1">
        <name>Mg(2+)</name>
        <dbReference type="ChEBI" id="CHEBI:18420"/>
    </cofactor>
</comment>
<comment type="activity regulation">
    <text evidence="1">By light-reversible phosphorylation.</text>
</comment>
<comment type="subunit">
    <text evidence="1">Homotetramer.</text>
</comment>
<comment type="subcellular location">
    <subcellularLocation>
        <location evidence="1">Cytoplasm</location>
    </subcellularLocation>
</comment>
<comment type="similarity">
    <text evidence="2">Belongs to the PEPCase type 1 family.</text>
</comment>
<keyword id="KW-0021">Allosteric enzyme</keyword>
<keyword id="KW-0120">Carbon dioxide fixation</keyword>
<keyword id="KW-0963">Cytoplasm</keyword>
<keyword id="KW-0456">Lyase</keyword>
<keyword id="KW-0460">Magnesium</keyword>
<keyword id="KW-0597">Phosphoprotein</keyword>
<keyword id="KW-0602">Photosynthesis</keyword>
<feature type="chain" id="PRO_0000166674" description="Phosphoenolpyruvate carboxylase">
    <location>
        <begin position="1"/>
        <end position="963"/>
    </location>
</feature>
<feature type="active site" evidence="1">
    <location>
        <position position="172"/>
    </location>
</feature>
<feature type="active site" evidence="1">
    <location>
        <position position="600"/>
    </location>
</feature>
<feature type="modified residue" description="Phosphoserine" evidence="1">
    <location>
        <position position="11"/>
    </location>
</feature>
<reference key="1">
    <citation type="journal article" date="1996" name="J. Plant Physiol.">
        <title>A method to isolate cDNA-quality RNA from adult conifer needles and a psbA cDNA from Norway spruce.</title>
        <authorList>
            <person name="Relle M."/>
            <person name="Sutter A."/>
            <person name="Wild A."/>
        </authorList>
    </citation>
    <scope>NUCLEOTIDE SEQUENCE [MRNA]</scope>
    <source>
        <tissue>Cotyledon</tissue>
        <tissue>Stem</tissue>
    </source>
</reference>
<sequence length="963" mass="109552">MARNNLEKMASIDAQMRLLVPGKVSEDDKLIEYDALLLDRFLDILQDLHGEDIRAMVQECYERSGEYEGKNDPHKLEELGNVLTSLDPGDSIVVASSFSHMLNLANLAEEVQIAYRRRNKIKRGGFADESNATTESDIEETFKRLVNQLGKSPAEVFDALKNQTVDLVLTAHPTQSVRRSLLQKHARIRNCLSQLYGKDITPDEKQELDEALLREIQAAFRTDEIRRTPPTPQDEMRAGMSYFHETIWKGVPKFLRRIDTALKSIGINERVPYNAPLIQFSSWMGGDRDGNPRVTPEVTRDVCLLARMMAANLYYSQIEDLMFELSMWRCSDELRARALQLHSASKKDAKHYIEFWKQIPPNEPFRVILGDVRDKLYNTRERTRQLLSNGISDIPEEVTFTNIDEFLEPLELCYRSLCSTGDQPIADGSLLDFMRQVSTFGLSFVKLDIRQESDRHSDVADAITRHLGIGSYKEWSEEQRQAWLLSELQGKRPLFGPDLPKTDEVRDVLDTFHVISELPADNFGAYIISMATAASDVLVVELLQRECHVKKPLRVVPLFEKLADLEAAPAALARLFSINWYRNRIDGKQEVMIGYSDSGKDAGRLSAGWALYKAQEDLIKVAKEFGIKLTMFHGRGGTVGRGGGPTHLAILSQPPDTIHGSFRVTVQGEVIEQSFGEEHLCFRTLQRFTAATLEHGMRPPVAPKPEWRELMDEMAVVATKEYRSIVFQDPRFVEYFRSATPELEYGRMNIGSRPSKRKPSGGIESLRAIPWIFAWTQTRFHLPVWLGFGAAFKHVMEKDIRNLHMLQQMYNEWPFFRVTIDLIEMVFAKGDPGIAALYDKLLVSDDLWAIGEKLRANYGETKDLLLQVAGHKDLLEGDPYLKQRLRLRDSYITTLNVCQAYTLKRIRDPNYHVNLRPHLSKESSTKPAAELVKLNPTSEYAPGLEDTLILTMKGIAAGMQNTG</sequence>
<organism>
    <name type="scientific">Picea abies</name>
    <name type="common">Norway spruce</name>
    <name type="synonym">Picea excelsa</name>
    <dbReference type="NCBI Taxonomy" id="3329"/>
    <lineage>
        <taxon>Eukaryota</taxon>
        <taxon>Viridiplantae</taxon>
        <taxon>Streptophyta</taxon>
        <taxon>Embryophyta</taxon>
        <taxon>Tracheophyta</taxon>
        <taxon>Spermatophyta</taxon>
        <taxon>Pinopsida</taxon>
        <taxon>Pinidae</taxon>
        <taxon>Conifers I</taxon>
        <taxon>Pinales</taxon>
        <taxon>Pinaceae</taxon>
        <taxon>Picea</taxon>
    </lineage>
</organism>
<dbReference type="EC" id="4.1.1.31"/>
<dbReference type="EMBL" id="X79090">
    <property type="protein sequence ID" value="CAA55700.1"/>
    <property type="molecule type" value="mRNA"/>
</dbReference>
<dbReference type="PIR" id="S49344">
    <property type="entry name" value="S49344"/>
</dbReference>
<dbReference type="SMR" id="P51063"/>
<dbReference type="GO" id="GO:0048046">
    <property type="term" value="C:apoplast"/>
    <property type="evidence" value="ECO:0007669"/>
    <property type="project" value="TreeGrafter"/>
</dbReference>
<dbReference type="GO" id="GO:0009507">
    <property type="term" value="C:chloroplast"/>
    <property type="evidence" value="ECO:0007669"/>
    <property type="project" value="TreeGrafter"/>
</dbReference>
<dbReference type="GO" id="GO:0005829">
    <property type="term" value="C:cytosol"/>
    <property type="evidence" value="ECO:0007669"/>
    <property type="project" value="TreeGrafter"/>
</dbReference>
<dbReference type="GO" id="GO:0008964">
    <property type="term" value="F:phosphoenolpyruvate carboxylase activity"/>
    <property type="evidence" value="ECO:0007669"/>
    <property type="project" value="UniProtKB-EC"/>
</dbReference>
<dbReference type="GO" id="GO:0015977">
    <property type="term" value="P:carbon fixation"/>
    <property type="evidence" value="ECO:0007669"/>
    <property type="project" value="UniProtKB-KW"/>
</dbReference>
<dbReference type="GO" id="GO:0048366">
    <property type="term" value="P:leaf development"/>
    <property type="evidence" value="ECO:0007669"/>
    <property type="project" value="TreeGrafter"/>
</dbReference>
<dbReference type="GO" id="GO:0015979">
    <property type="term" value="P:photosynthesis"/>
    <property type="evidence" value="ECO:0007669"/>
    <property type="project" value="UniProtKB-KW"/>
</dbReference>
<dbReference type="GO" id="GO:0006099">
    <property type="term" value="P:tricarboxylic acid cycle"/>
    <property type="evidence" value="ECO:0007669"/>
    <property type="project" value="InterPro"/>
</dbReference>
<dbReference type="FunFam" id="1.20.1440.90:FF:000001">
    <property type="entry name" value="Phosphoenolpyruvate carboxylase 1"/>
    <property type="match status" value="1"/>
</dbReference>
<dbReference type="Gene3D" id="1.20.1440.90">
    <property type="entry name" value="Phosphoenolpyruvate/pyruvate domain"/>
    <property type="match status" value="1"/>
</dbReference>
<dbReference type="HAMAP" id="MF_00595">
    <property type="entry name" value="PEPcase_type1"/>
    <property type="match status" value="1"/>
</dbReference>
<dbReference type="InterPro" id="IPR021135">
    <property type="entry name" value="PEP_COase"/>
</dbReference>
<dbReference type="InterPro" id="IPR022805">
    <property type="entry name" value="PEP_COase_bac/pln-type"/>
</dbReference>
<dbReference type="InterPro" id="IPR018129">
    <property type="entry name" value="PEP_COase_Lys_AS"/>
</dbReference>
<dbReference type="InterPro" id="IPR033129">
    <property type="entry name" value="PEPCASE_His_AS"/>
</dbReference>
<dbReference type="InterPro" id="IPR015813">
    <property type="entry name" value="Pyrv/PenolPyrv_kinase-like_dom"/>
</dbReference>
<dbReference type="NCBIfam" id="NF000584">
    <property type="entry name" value="PRK00009.1"/>
    <property type="match status" value="1"/>
</dbReference>
<dbReference type="PANTHER" id="PTHR30523">
    <property type="entry name" value="PHOSPHOENOLPYRUVATE CARBOXYLASE"/>
    <property type="match status" value="1"/>
</dbReference>
<dbReference type="PANTHER" id="PTHR30523:SF33">
    <property type="entry name" value="PHOSPHOENOLPYRUVATE CARBOXYLASE 3"/>
    <property type="match status" value="1"/>
</dbReference>
<dbReference type="Pfam" id="PF00311">
    <property type="entry name" value="PEPcase"/>
    <property type="match status" value="1"/>
</dbReference>
<dbReference type="PRINTS" id="PR00150">
    <property type="entry name" value="PEPCARBXLASE"/>
</dbReference>
<dbReference type="SUPFAM" id="SSF51621">
    <property type="entry name" value="Phosphoenolpyruvate/pyruvate domain"/>
    <property type="match status" value="1"/>
</dbReference>
<dbReference type="PROSITE" id="PS00781">
    <property type="entry name" value="PEPCASE_1"/>
    <property type="match status" value="1"/>
</dbReference>
<dbReference type="PROSITE" id="PS00393">
    <property type="entry name" value="PEPCASE_2"/>
    <property type="match status" value="1"/>
</dbReference>
<evidence type="ECO:0000250" key="1"/>
<evidence type="ECO:0000305" key="2"/>
<proteinExistence type="evidence at transcript level"/>